<name>PLSX_LACLS</name>
<keyword id="KW-0963">Cytoplasm</keyword>
<keyword id="KW-0444">Lipid biosynthesis</keyword>
<keyword id="KW-0443">Lipid metabolism</keyword>
<keyword id="KW-0594">Phospholipid biosynthesis</keyword>
<keyword id="KW-1208">Phospholipid metabolism</keyword>
<keyword id="KW-0808">Transferase</keyword>
<dbReference type="EC" id="2.3.1.274" evidence="1"/>
<dbReference type="EMBL" id="CP000425">
    <property type="protein sequence ID" value="ABJ71688.1"/>
    <property type="molecule type" value="Genomic_DNA"/>
</dbReference>
<dbReference type="RefSeq" id="WP_011675127.1">
    <property type="nucleotide sequence ID" value="NC_008527.1"/>
</dbReference>
<dbReference type="SMR" id="Q033D4"/>
<dbReference type="KEGG" id="llc:LACR_0061"/>
<dbReference type="HOGENOM" id="CLU_039379_1_1_9"/>
<dbReference type="UniPathway" id="UPA00085"/>
<dbReference type="Proteomes" id="UP000000240">
    <property type="component" value="Chromosome"/>
</dbReference>
<dbReference type="GO" id="GO:0005737">
    <property type="term" value="C:cytoplasm"/>
    <property type="evidence" value="ECO:0007669"/>
    <property type="project" value="UniProtKB-SubCell"/>
</dbReference>
<dbReference type="GO" id="GO:0043811">
    <property type="term" value="F:phosphate:acyl-[acyl carrier protein] acyltransferase activity"/>
    <property type="evidence" value="ECO:0007669"/>
    <property type="project" value="UniProtKB-UniRule"/>
</dbReference>
<dbReference type="GO" id="GO:0006633">
    <property type="term" value="P:fatty acid biosynthetic process"/>
    <property type="evidence" value="ECO:0007669"/>
    <property type="project" value="UniProtKB-UniRule"/>
</dbReference>
<dbReference type="GO" id="GO:0008654">
    <property type="term" value="P:phospholipid biosynthetic process"/>
    <property type="evidence" value="ECO:0007669"/>
    <property type="project" value="UniProtKB-KW"/>
</dbReference>
<dbReference type="Gene3D" id="3.40.718.10">
    <property type="entry name" value="Isopropylmalate Dehydrogenase"/>
    <property type="match status" value="1"/>
</dbReference>
<dbReference type="HAMAP" id="MF_00019">
    <property type="entry name" value="PlsX"/>
    <property type="match status" value="1"/>
</dbReference>
<dbReference type="InterPro" id="IPR003664">
    <property type="entry name" value="FA_synthesis"/>
</dbReference>
<dbReference type="InterPro" id="IPR012281">
    <property type="entry name" value="Phospholipid_synth_PlsX-like"/>
</dbReference>
<dbReference type="NCBIfam" id="TIGR00182">
    <property type="entry name" value="plsX"/>
    <property type="match status" value="1"/>
</dbReference>
<dbReference type="PANTHER" id="PTHR30100">
    <property type="entry name" value="FATTY ACID/PHOSPHOLIPID SYNTHESIS PROTEIN PLSX"/>
    <property type="match status" value="1"/>
</dbReference>
<dbReference type="PANTHER" id="PTHR30100:SF1">
    <property type="entry name" value="PHOSPHATE ACYLTRANSFERASE"/>
    <property type="match status" value="1"/>
</dbReference>
<dbReference type="Pfam" id="PF02504">
    <property type="entry name" value="FA_synthesis"/>
    <property type="match status" value="1"/>
</dbReference>
<dbReference type="PIRSF" id="PIRSF002465">
    <property type="entry name" value="Phsphlp_syn_PlsX"/>
    <property type="match status" value="1"/>
</dbReference>
<dbReference type="SUPFAM" id="SSF53659">
    <property type="entry name" value="Isocitrate/Isopropylmalate dehydrogenase-like"/>
    <property type="match status" value="1"/>
</dbReference>
<protein>
    <recommendedName>
        <fullName evidence="1">Phosphate acyltransferase</fullName>
        <ecNumber evidence="1">2.3.1.274</ecNumber>
    </recommendedName>
    <alternativeName>
        <fullName evidence="1">Acyl-ACP phosphotransacylase</fullName>
    </alternativeName>
    <alternativeName>
        <fullName evidence="1">Acyl-[acyl-carrier-protein]--phosphate acyltransferase</fullName>
    </alternativeName>
    <alternativeName>
        <fullName evidence="1">Phosphate-acyl-ACP acyltransferase</fullName>
    </alternativeName>
</protein>
<reference key="1">
    <citation type="journal article" date="2006" name="Proc. Natl. Acad. Sci. U.S.A.">
        <title>Comparative genomics of the lactic acid bacteria.</title>
        <authorList>
            <person name="Makarova K.S."/>
            <person name="Slesarev A."/>
            <person name="Wolf Y.I."/>
            <person name="Sorokin A."/>
            <person name="Mirkin B."/>
            <person name="Koonin E.V."/>
            <person name="Pavlov A."/>
            <person name="Pavlova N."/>
            <person name="Karamychev V."/>
            <person name="Polouchine N."/>
            <person name="Shakhova V."/>
            <person name="Grigoriev I."/>
            <person name="Lou Y."/>
            <person name="Rohksar D."/>
            <person name="Lucas S."/>
            <person name="Huang K."/>
            <person name="Goodstein D.M."/>
            <person name="Hawkins T."/>
            <person name="Plengvidhya V."/>
            <person name="Welker D."/>
            <person name="Hughes J."/>
            <person name="Goh Y."/>
            <person name="Benson A."/>
            <person name="Baldwin K."/>
            <person name="Lee J.-H."/>
            <person name="Diaz-Muniz I."/>
            <person name="Dosti B."/>
            <person name="Smeianov V."/>
            <person name="Wechter W."/>
            <person name="Barabote R."/>
            <person name="Lorca G."/>
            <person name="Altermann E."/>
            <person name="Barrangou R."/>
            <person name="Ganesan B."/>
            <person name="Xie Y."/>
            <person name="Rawsthorne H."/>
            <person name="Tamir D."/>
            <person name="Parker C."/>
            <person name="Breidt F."/>
            <person name="Broadbent J.R."/>
            <person name="Hutkins R."/>
            <person name="O'Sullivan D."/>
            <person name="Steele J."/>
            <person name="Unlu G."/>
            <person name="Saier M.H. Jr."/>
            <person name="Klaenhammer T."/>
            <person name="Richardson P."/>
            <person name="Kozyavkin S."/>
            <person name="Weimer B.C."/>
            <person name="Mills D.A."/>
        </authorList>
    </citation>
    <scope>NUCLEOTIDE SEQUENCE [LARGE SCALE GENOMIC DNA]</scope>
    <source>
        <strain>SK11</strain>
    </source>
</reference>
<feature type="chain" id="PRO_1000001779" description="Phosphate acyltransferase">
    <location>
        <begin position="1"/>
        <end position="331"/>
    </location>
</feature>
<accession>Q033D4</accession>
<organism>
    <name type="scientific">Lactococcus lactis subsp. cremoris (strain SK11)</name>
    <dbReference type="NCBI Taxonomy" id="272622"/>
    <lineage>
        <taxon>Bacteria</taxon>
        <taxon>Bacillati</taxon>
        <taxon>Bacillota</taxon>
        <taxon>Bacilli</taxon>
        <taxon>Lactobacillales</taxon>
        <taxon>Streptococcaceae</taxon>
        <taxon>Lactococcus</taxon>
        <taxon>Lactococcus cremoris subsp. cremoris</taxon>
    </lineage>
</organism>
<comment type="function">
    <text evidence="1">Catalyzes the reversible formation of acyl-phosphate (acyl-PO(4)) from acyl-[acyl-carrier-protein] (acyl-ACP). This enzyme utilizes acyl-ACP as fatty acyl donor, but not acyl-CoA.</text>
</comment>
<comment type="catalytic activity">
    <reaction evidence="1">
        <text>a fatty acyl-[ACP] + phosphate = an acyl phosphate + holo-[ACP]</text>
        <dbReference type="Rhea" id="RHEA:42292"/>
        <dbReference type="Rhea" id="RHEA-COMP:9685"/>
        <dbReference type="Rhea" id="RHEA-COMP:14125"/>
        <dbReference type="ChEBI" id="CHEBI:43474"/>
        <dbReference type="ChEBI" id="CHEBI:59918"/>
        <dbReference type="ChEBI" id="CHEBI:64479"/>
        <dbReference type="ChEBI" id="CHEBI:138651"/>
        <dbReference type="EC" id="2.3.1.274"/>
    </reaction>
</comment>
<comment type="pathway">
    <text evidence="1">Lipid metabolism; phospholipid metabolism.</text>
</comment>
<comment type="subunit">
    <text evidence="1">Homodimer. Probably interacts with PlsY.</text>
</comment>
<comment type="subcellular location">
    <subcellularLocation>
        <location evidence="1">Cytoplasm</location>
    </subcellularLocation>
    <text evidence="1">Associated with the membrane possibly through PlsY.</text>
</comment>
<comment type="similarity">
    <text evidence="1">Belongs to the PlsX family.</text>
</comment>
<evidence type="ECO:0000255" key="1">
    <source>
        <dbReference type="HAMAP-Rule" id="MF_00019"/>
    </source>
</evidence>
<proteinExistence type="inferred from homology"/>
<sequence>MKIAIDAMGGDFAPENIVKGVNLAKKELSDVTFQLYGDGAKIRQFLDDETAIEIIETTEVIDFHDDPVAAIKSKKDSSLVRAVTAVKKREADAVLSAGSTGALLTAGLMLVKRIKQVSRPALMSTLPTADGRGFDMLDLGANTENTAHHLVDFAILGSYYAENVRGIEKPRVALISNGSEESKGSPTVKEAHEILSAMTEINFIGNIESRDLLSGGADVVVTDGFTGNAILKAIEGTATVLMKEIKSAIMAGSVTTKIGGVLIKKPLSGLKDLMSTDGAGGAAFVGLKAPVVKAHGNSSELAIASALKQIHKMLESDVSGKLVKHFENMDK</sequence>
<gene>
    <name evidence="1" type="primary">plsX</name>
    <name type="ordered locus">LACR_0061</name>
</gene>